<dbReference type="EMBL" id="CR942397">
    <property type="protein sequence ID" value="CAJ83750.1"/>
    <property type="molecule type" value="mRNA"/>
</dbReference>
<dbReference type="RefSeq" id="NP_001039104.1">
    <property type="nucleotide sequence ID" value="NM_001045639.1"/>
</dbReference>
<dbReference type="SMR" id="Q28C89"/>
<dbReference type="FunCoup" id="Q28C89">
    <property type="interactions" value="626"/>
</dbReference>
<dbReference type="PaxDb" id="8364-ENSXETP00000033971"/>
<dbReference type="GeneID" id="733924"/>
<dbReference type="KEGG" id="xtr:733924"/>
<dbReference type="AGR" id="Xenbase:XB-GENE-972085"/>
<dbReference type="CTD" id="343930"/>
<dbReference type="Xenbase" id="XB-GENE-972085">
    <property type="gene designation" value="msgn1"/>
</dbReference>
<dbReference type="eggNOG" id="KOG4029">
    <property type="taxonomic scope" value="Eukaryota"/>
</dbReference>
<dbReference type="HOGENOM" id="CLU_084234_1_1_1"/>
<dbReference type="InParanoid" id="Q28C89"/>
<dbReference type="OMA" id="SSWDWKN"/>
<dbReference type="OrthoDB" id="10063280at2759"/>
<dbReference type="PhylomeDB" id="Q28C89"/>
<dbReference type="TreeFam" id="TF325707"/>
<dbReference type="Proteomes" id="UP000008143">
    <property type="component" value="Chromosome 5"/>
</dbReference>
<dbReference type="Bgee" id="ENSXETG00000015571">
    <property type="expression patterns" value="Expressed in neurula embryo and 6 other cell types or tissues"/>
</dbReference>
<dbReference type="GO" id="GO:0005634">
    <property type="term" value="C:nucleus"/>
    <property type="evidence" value="ECO:0007669"/>
    <property type="project" value="UniProtKB-SubCell"/>
</dbReference>
<dbReference type="GO" id="GO:0003677">
    <property type="term" value="F:DNA binding"/>
    <property type="evidence" value="ECO:0007669"/>
    <property type="project" value="UniProtKB-KW"/>
</dbReference>
<dbReference type="GO" id="GO:0003700">
    <property type="term" value="F:DNA-binding transcription factor activity"/>
    <property type="evidence" value="ECO:0007669"/>
    <property type="project" value="InterPro"/>
</dbReference>
<dbReference type="GO" id="GO:0046983">
    <property type="term" value="F:protein dimerization activity"/>
    <property type="evidence" value="ECO:0007669"/>
    <property type="project" value="InterPro"/>
</dbReference>
<dbReference type="GO" id="GO:0030154">
    <property type="term" value="P:cell differentiation"/>
    <property type="evidence" value="ECO:0007669"/>
    <property type="project" value="UniProtKB-KW"/>
</dbReference>
<dbReference type="CDD" id="cd18939">
    <property type="entry name" value="bHLH_TS_Msgn1"/>
    <property type="match status" value="1"/>
</dbReference>
<dbReference type="FunFam" id="4.10.280.10:FF:000056">
    <property type="entry name" value="mesogenin-1"/>
    <property type="match status" value="1"/>
</dbReference>
<dbReference type="Gene3D" id="4.10.280.10">
    <property type="entry name" value="Helix-loop-helix DNA-binding domain"/>
    <property type="match status" value="1"/>
</dbReference>
<dbReference type="InterPro" id="IPR011598">
    <property type="entry name" value="bHLH_dom"/>
</dbReference>
<dbReference type="InterPro" id="IPR036638">
    <property type="entry name" value="HLH_DNA-bd_sf"/>
</dbReference>
<dbReference type="InterPro" id="IPR040259">
    <property type="entry name" value="Mesogenin/MesP"/>
</dbReference>
<dbReference type="PANTHER" id="PTHR20937">
    <property type="entry name" value="IP14615P"/>
    <property type="match status" value="1"/>
</dbReference>
<dbReference type="PANTHER" id="PTHR20937:SF4">
    <property type="entry name" value="MESOGENIN-1"/>
    <property type="match status" value="1"/>
</dbReference>
<dbReference type="Pfam" id="PF00010">
    <property type="entry name" value="HLH"/>
    <property type="match status" value="1"/>
</dbReference>
<dbReference type="SMART" id="SM00353">
    <property type="entry name" value="HLH"/>
    <property type="match status" value="1"/>
</dbReference>
<dbReference type="SUPFAM" id="SSF47459">
    <property type="entry name" value="HLH, helix-loop-helix DNA-binding domain"/>
    <property type="match status" value="1"/>
</dbReference>
<dbReference type="PROSITE" id="PS50888">
    <property type="entry name" value="BHLH"/>
    <property type="match status" value="1"/>
</dbReference>
<evidence type="ECO:0000250" key="1"/>
<evidence type="ECO:0000255" key="2">
    <source>
        <dbReference type="PROSITE-ProRule" id="PRU00981"/>
    </source>
</evidence>
<evidence type="ECO:0000256" key="3">
    <source>
        <dbReference type="SAM" id="MobiDB-lite"/>
    </source>
</evidence>
<protein>
    <recommendedName>
        <fullName>Mesogenin-1</fullName>
    </recommendedName>
</protein>
<proteinExistence type="evidence at transcript level"/>
<gene>
    <name type="primary">msgn1</name>
    <name type="ORF">TGas099h21.1</name>
</gene>
<name>MSGN1_XENTR</name>
<reference key="1">
    <citation type="submission" date="2006-10" db="EMBL/GenBank/DDBJ databases">
        <authorList>
            <consortium name="Sanger Xenopus tropicalis EST/cDNA project"/>
        </authorList>
    </citation>
    <scope>NUCLEOTIDE SEQUENCE [LARGE SCALE MRNA]</scope>
    <source>
        <tissue>Gastrula</tissue>
    </source>
</reference>
<organism>
    <name type="scientific">Xenopus tropicalis</name>
    <name type="common">Western clawed frog</name>
    <name type="synonym">Silurana tropicalis</name>
    <dbReference type="NCBI Taxonomy" id="8364"/>
    <lineage>
        <taxon>Eukaryota</taxon>
        <taxon>Metazoa</taxon>
        <taxon>Chordata</taxon>
        <taxon>Craniata</taxon>
        <taxon>Vertebrata</taxon>
        <taxon>Euteleostomi</taxon>
        <taxon>Amphibia</taxon>
        <taxon>Batrachia</taxon>
        <taxon>Anura</taxon>
        <taxon>Pipoidea</taxon>
        <taxon>Pipidae</taxon>
        <taxon>Xenopodinae</taxon>
        <taxon>Xenopus</taxon>
        <taxon>Silurana</taxon>
    </lineage>
</organism>
<sequence length="172" mass="19621">METLHHPLVKMEDDYALSSDSEPNSSCMASTWDWKNNDERYSLSQTPSPQSLSPAVSYESPYSSSSHTQGLEEMPFSYSLLQYPSLCHGDNGDLTKKDHGHKPSMTVQRRRKASEREKLRMRAIAEALHTLRNNLPPMYSQGRQPLTKIQTLKCTINYISELTNLLQCSKRV</sequence>
<keyword id="KW-0217">Developmental protein</keyword>
<keyword id="KW-0221">Differentiation</keyword>
<keyword id="KW-0238">DNA-binding</keyword>
<keyword id="KW-0539">Nucleus</keyword>
<keyword id="KW-1185">Reference proteome</keyword>
<keyword id="KW-0804">Transcription</keyword>
<keyword id="KW-0805">Transcription regulation</keyword>
<accession>Q28C89</accession>
<comment type="function">
    <text evidence="1">Involved in specifying the paraxial, but not dorsal, mesoderm. May regulate the expression of T-box transcription factors required for mesoderm formation and differentiation, such as brachyury T, wnt8, vegt and eomes (By similarity).</text>
</comment>
<comment type="subcellular location">
    <subcellularLocation>
        <location evidence="2">Nucleus</location>
    </subcellularLocation>
</comment>
<feature type="chain" id="PRO_0000330031" description="Mesogenin-1">
    <location>
        <begin position="1"/>
        <end position="172"/>
    </location>
</feature>
<feature type="domain" description="bHLH" evidence="2">
    <location>
        <begin position="108"/>
        <end position="162"/>
    </location>
</feature>
<feature type="region of interest" description="Disordered" evidence="3">
    <location>
        <begin position="1"/>
        <end position="69"/>
    </location>
</feature>
<feature type="compositionally biased region" description="Polar residues" evidence="3">
    <location>
        <begin position="18"/>
        <end position="29"/>
    </location>
</feature>
<feature type="compositionally biased region" description="Low complexity" evidence="3">
    <location>
        <begin position="42"/>
        <end position="66"/>
    </location>
</feature>